<dbReference type="EMBL" id="CP000776">
    <property type="protein sequence ID" value="ABS51807.1"/>
    <property type="molecule type" value="Genomic_DNA"/>
</dbReference>
<dbReference type="RefSeq" id="WP_011991554.1">
    <property type="nucleotide sequence ID" value="NC_009714.1"/>
</dbReference>
<dbReference type="SMR" id="A7HZL6"/>
<dbReference type="STRING" id="360107.CHAB381_0094"/>
<dbReference type="KEGG" id="cha:CHAB381_0094"/>
<dbReference type="eggNOG" id="COG0093">
    <property type="taxonomic scope" value="Bacteria"/>
</dbReference>
<dbReference type="HOGENOM" id="CLU_095071_2_1_7"/>
<dbReference type="OrthoDB" id="9806379at2"/>
<dbReference type="Proteomes" id="UP000002407">
    <property type="component" value="Chromosome"/>
</dbReference>
<dbReference type="GO" id="GO:0022625">
    <property type="term" value="C:cytosolic large ribosomal subunit"/>
    <property type="evidence" value="ECO:0007669"/>
    <property type="project" value="TreeGrafter"/>
</dbReference>
<dbReference type="GO" id="GO:0070180">
    <property type="term" value="F:large ribosomal subunit rRNA binding"/>
    <property type="evidence" value="ECO:0007669"/>
    <property type="project" value="TreeGrafter"/>
</dbReference>
<dbReference type="GO" id="GO:0003735">
    <property type="term" value="F:structural constituent of ribosome"/>
    <property type="evidence" value="ECO:0007669"/>
    <property type="project" value="InterPro"/>
</dbReference>
<dbReference type="GO" id="GO:0006412">
    <property type="term" value="P:translation"/>
    <property type="evidence" value="ECO:0007669"/>
    <property type="project" value="UniProtKB-UniRule"/>
</dbReference>
<dbReference type="CDD" id="cd00337">
    <property type="entry name" value="Ribosomal_uL14"/>
    <property type="match status" value="1"/>
</dbReference>
<dbReference type="FunFam" id="2.40.150.20:FF:000001">
    <property type="entry name" value="50S ribosomal protein L14"/>
    <property type="match status" value="1"/>
</dbReference>
<dbReference type="Gene3D" id="2.40.150.20">
    <property type="entry name" value="Ribosomal protein L14"/>
    <property type="match status" value="1"/>
</dbReference>
<dbReference type="HAMAP" id="MF_01367">
    <property type="entry name" value="Ribosomal_uL14"/>
    <property type="match status" value="1"/>
</dbReference>
<dbReference type="InterPro" id="IPR000218">
    <property type="entry name" value="Ribosomal_uL14"/>
</dbReference>
<dbReference type="InterPro" id="IPR005745">
    <property type="entry name" value="Ribosomal_uL14_bac-type"/>
</dbReference>
<dbReference type="InterPro" id="IPR019972">
    <property type="entry name" value="Ribosomal_uL14_CS"/>
</dbReference>
<dbReference type="InterPro" id="IPR036853">
    <property type="entry name" value="Ribosomal_uL14_sf"/>
</dbReference>
<dbReference type="NCBIfam" id="TIGR01067">
    <property type="entry name" value="rplN_bact"/>
    <property type="match status" value="1"/>
</dbReference>
<dbReference type="PANTHER" id="PTHR11761">
    <property type="entry name" value="50S/60S RIBOSOMAL PROTEIN L14/L23"/>
    <property type="match status" value="1"/>
</dbReference>
<dbReference type="PANTHER" id="PTHR11761:SF3">
    <property type="entry name" value="LARGE RIBOSOMAL SUBUNIT PROTEIN UL14M"/>
    <property type="match status" value="1"/>
</dbReference>
<dbReference type="Pfam" id="PF00238">
    <property type="entry name" value="Ribosomal_L14"/>
    <property type="match status" value="1"/>
</dbReference>
<dbReference type="SMART" id="SM01374">
    <property type="entry name" value="Ribosomal_L14"/>
    <property type="match status" value="1"/>
</dbReference>
<dbReference type="SUPFAM" id="SSF50193">
    <property type="entry name" value="Ribosomal protein L14"/>
    <property type="match status" value="1"/>
</dbReference>
<dbReference type="PROSITE" id="PS00049">
    <property type="entry name" value="RIBOSOMAL_L14"/>
    <property type="match status" value="1"/>
</dbReference>
<keyword id="KW-1185">Reference proteome</keyword>
<keyword id="KW-0687">Ribonucleoprotein</keyword>
<keyword id="KW-0689">Ribosomal protein</keyword>
<keyword id="KW-0694">RNA-binding</keyword>
<keyword id="KW-0699">rRNA-binding</keyword>
<protein>
    <recommendedName>
        <fullName evidence="1">Large ribosomal subunit protein uL14</fullName>
    </recommendedName>
    <alternativeName>
        <fullName evidence="2">50S ribosomal protein L14</fullName>
    </alternativeName>
</protein>
<gene>
    <name evidence="1" type="primary">rplN</name>
    <name type="ordered locus">CHAB381_0094</name>
</gene>
<accession>A7HZL6</accession>
<organism>
    <name type="scientific">Campylobacter hominis (strain ATCC BAA-381 / DSM 21671 / CCUG 45161 / LMG 19568 / NCTC 13146 / CH001A)</name>
    <dbReference type="NCBI Taxonomy" id="360107"/>
    <lineage>
        <taxon>Bacteria</taxon>
        <taxon>Pseudomonadati</taxon>
        <taxon>Campylobacterota</taxon>
        <taxon>Epsilonproteobacteria</taxon>
        <taxon>Campylobacterales</taxon>
        <taxon>Campylobacteraceae</taxon>
        <taxon>Campylobacter</taxon>
    </lineage>
</organism>
<comment type="function">
    <text evidence="1">Binds to 23S rRNA. Forms part of two intersubunit bridges in the 70S ribosome.</text>
</comment>
<comment type="subunit">
    <text evidence="1">Part of the 50S ribosomal subunit. Forms a cluster with proteins L3 and L19. In the 70S ribosome, L14 and L19 interact and together make contacts with the 16S rRNA in bridges B5 and B8.</text>
</comment>
<comment type="similarity">
    <text evidence="1">Belongs to the universal ribosomal protein uL14 family.</text>
</comment>
<reference key="1">
    <citation type="submission" date="2007-07" db="EMBL/GenBank/DDBJ databases">
        <title>Complete genome sequence of Campylobacter hominis ATCC BAA-381, a commensal isolated from the human gastrointestinal tract.</title>
        <authorList>
            <person name="Fouts D.E."/>
            <person name="Mongodin E.F."/>
            <person name="Puiu D."/>
            <person name="Sebastian Y."/>
            <person name="Miller W.G."/>
            <person name="Mandrell R.E."/>
            <person name="Nelson K.E."/>
        </authorList>
    </citation>
    <scope>NUCLEOTIDE SEQUENCE [LARGE SCALE GENOMIC DNA]</scope>
    <source>
        <strain>ATCC BAA-381 / DSM 21671 / CCUG 45161 / LMG 19568 / NCTC 13146 / CH001A</strain>
    </source>
</reference>
<proteinExistence type="inferred from homology"/>
<evidence type="ECO:0000255" key="1">
    <source>
        <dbReference type="HAMAP-Rule" id="MF_01367"/>
    </source>
</evidence>
<evidence type="ECO:0000305" key="2"/>
<feature type="chain" id="PRO_1000055543" description="Large ribosomal subunit protein uL14">
    <location>
        <begin position="1"/>
        <end position="122"/>
    </location>
</feature>
<name>RL14_CAMHC</name>
<sequence>MIQSFTRLAVADNSGAKELMCIKILGGSKRRYATVGDIIVCSVKKALPNGKIKRGQVVKAVVVRTKKELHRGNGSLIRFDENAAVVLDSKKELIGTRIFGPVGREVRYNGFMKIVSLAPEVL</sequence>